<reference key="1">
    <citation type="journal article" date="2003" name="J. Mammal.">
        <title>Phylogenetic diversification within the Sorex cinereus group (Soricidae).</title>
        <authorList>
            <person name="Demboski J.R."/>
            <person name="Cook J.A."/>
        </authorList>
    </citation>
    <scope>NUCLEOTIDE SEQUENCE [GENOMIC DNA]</scope>
    <source>
        <strain>Isolate AFTC 25384</strain>
        <strain>Isolate AFTC 4300</strain>
        <strain>Isolate AFTC 7380</strain>
        <strain>Isolate NK 7943</strain>
    </source>
</reference>
<reference key="2">
    <citation type="journal article" date="1997" name="Zool. Sci.">
        <title>Molecular phylogeny from nucleotide sequences of the mitochondrial cytochrome b gene and evolutionary history of Eurasian soricine shrews (Mammalia, Insectivora).</title>
        <authorList>
            <person name="Ohdachi S."/>
            <person name="Masuda R."/>
            <person name="Abe H."/>
            <person name="Adachi J."/>
            <person name="Dokuchaev N.E."/>
            <person name="Haukisalmi V."/>
            <person name="Yoshida M.C."/>
        </authorList>
    </citation>
    <scope>NUCLEOTIDE SEQUENCE [GENOMIC DNA] OF 1-134</scope>
    <source>
        <strain>Alberta</strain>
        <tissue>Hindfoot</tissue>
    </source>
</reference>
<reference key="3">
    <citation type="journal article" date="1999" name="Mol. Phylogenet. Evol.">
        <title>Molecular phylogeny and evolution of Sorex shrews (Soricidae: Insectivora) inferred from mitochondrial DNA sequence data.</title>
        <authorList>
            <person name="Fumagalli L."/>
            <person name="Taberlet P."/>
            <person name="Stewart D.T."/>
            <person name="Gielly L."/>
            <person name="Hausser J."/>
            <person name="Vogel P."/>
        </authorList>
    </citation>
    <scope>NUCLEOTIDE SEQUENCE [GENOMIC DNA] OF 44-379</scope>
</reference>
<feature type="chain" id="PRO_0000061553" description="Cytochrome b">
    <location>
        <begin position="1"/>
        <end position="379"/>
    </location>
</feature>
<feature type="transmembrane region" description="Helical" evidence="2">
    <location>
        <begin position="33"/>
        <end position="53"/>
    </location>
</feature>
<feature type="transmembrane region" description="Helical" evidence="2">
    <location>
        <begin position="77"/>
        <end position="98"/>
    </location>
</feature>
<feature type="transmembrane region" description="Helical" evidence="2">
    <location>
        <begin position="113"/>
        <end position="133"/>
    </location>
</feature>
<feature type="transmembrane region" description="Helical" evidence="2">
    <location>
        <begin position="178"/>
        <end position="198"/>
    </location>
</feature>
<feature type="transmembrane region" description="Helical" evidence="2">
    <location>
        <begin position="226"/>
        <end position="246"/>
    </location>
</feature>
<feature type="transmembrane region" description="Helical" evidence="2">
    <location>
        <begin position="288"/>
        <end position="308"/>
    </location>
</feature>
<feature type="transmembrane region" description="Helical" evidence="2">
    <location>
        <begin position="320"/>
        <end position="340"/>
    </location>
</feature>
<feature type="transmembrane region" description="Helical" evidence="2">
    <location>
        <begin position="347"/>
        <end position="367"/>
    </location>
</feature>
<feature type="binding site" description="axial binding residue" evidence="2">
    <location>
        <position position="83"/>
    </location>
    <ligand>
        <name>heme b</name>
        <dbReference type="ChEBI" id="CHEBI:60344"/>
        <label>b562</label>
    </ligand>
    <ligandPart>
        <name>Fe</name>
        <dbReference type="ChEBI" id="CHEBI:18248"/>
    </ligandPart>
</feature>
<feature type="binding site" description="axial binding residue" evidence="2">
    <location>
        <position position="97"/>
    </location>
    <ligand>
        <name>heme b</name>
        <dbReference type="ChEBI" id="CHEBI:60344"/>
        <label>b566</label>
    </ligand>
    <ligandPart>
        <name>Fe</name>
        <dbReference type="ChEBI" id="CHEBI:18248"/>
    </ligandPart>
</feature>
<feature type="binding site" description="axial binding residue" evidence="2">
    <location>
        <position position="182"/>
    </location>
    <ligand>
        <name>heme b</name>
        <dbReference type="ChEBI" id="CHEBI:60344"/>
        <label>b562</label>
    </ligand>
    <ligandPart>
        <name>Fe</name>
        <dbReference type="ChEBI" id="CHEBI:18248"/>
    </ligandPart>
</feature>
<feature type="binding site" description="axial binding residue" evidence="2">
    <location>
        <position position="196"/>
    </location>
    <ligand>
        <name>heme b</name>
        <dbReference type="ChEBI" id="CHEBI:60344"/>
        <label>b566</label>
    </ligand>
    <ligandPart>
        <name>Fe</name>
        <dbReference type="ChEBI" id="CHEBI:18248"/>
    </ligandPart>
</feature>
<feature type="binding site" evidence="2">
    <location>
        <position position="201"/>
    </location>
    <ligand>
        <name>a ubiquinone</name>
        <dbReference type="ChEBI" id="CHEBI:16389"/>
    </ligand>
</feature>
<feature type="sequence variant">
    <original>T</original>
    <variation>I</variation>
    <location>
        <position position="238"/>
    </location>
</feature>
<feature type="sequence variant">
    <original>T</original>
    <variation>V</variation>
    <location>
        <position position="238"/>
    </location>
</feature>
<feature type="sequence variant">
    <original>I</original>
    <variation>V</variation>
    <location>
        <position position="304"/>
    </location>
</feature>
<feature type="sequence conflict" description="In Ref. 1; CAA04100." evidence="5" ref="1">
    <original>FLA</original>
    <variation>LLP</variation>
    <location>
        <begin position="50"/>
        <end position="52"/>
    </location>
</feature>
<feature type="sequence conflict" description="In Ref. 1; CAA04100." evidence="5" ref="1">
    <original>T</original>
    <variation>S</variation>
    <location>
        <position position="61"/>
    </location>
</feature>
<feature type="sequence conflict" description="In Ref. 1; CAA04100." evidence="5" ref="1">
    <original>DVN</original>
    <variation>EVD</variation>
    <location>
        <begin position="72"/>
        <end position="74"/>
    </location>
</feature>
<feature type="sequence conflict" description="In Ref. 1; CAA04100." evidence="5" ref="1">
    <original>PFII</original>
    <variation>LLLL</variation>
    <location>
        <begin position="346"/>
        <end position="349"/>
    </location>
</feature>
<feature type="sequence conflict" description="In Ref. 1; CAA04100." evidence="5" ref="1">
    <original>L</original>
    <variation>I</variation>
    <location>
        <position position="360"/>
    </location>
</feature>
<feature type="sequence conflict" description="In Ref. 1; CAA04100." evidence="5" ref="1">
    <original>LVL</original>
    <variation>FVV</variation>
    <location>
        <begin position="363"/>
        <end position="365"/>
    </location>
</feature>
<feature type="sequence conflict" description="In Ref. 1; CAA04100." evidence="5" ref="1">
    <original>F</original>
    <variation>L</variation>
    <location>
        <position position="372"/>
    </location>
</feature>
<sequence>MTNLRKTHPLMKIINSSFIDLPAPSNISSWWNFGSLLGVCLIVQILTGLFLAMHYTSDTMTAFSSVTHICRDVNYGWLIRYLHANGASMFFICLFLHVGRGLYYGSYMFLETWNIGVLLLFAVMATAFMGYVLPWGQMSFWGATVITNLLSAIPYIGSDLVEWIWGGFSVDKATLTRFFAFHFILPFIIAALAGVHLLFLHETGSNNPSGLCSDADKIPFHPYYTIKDILGVLLLILTLTSLVLFSPDLLGDPDNYTPANPLNTPPHIKPEWYFLFAYAILRSIPNKLGGVLALVLSILVLAVIPFLHTSKQRSMMFRPFSQCLFWILVADLLTLTWIGGQPVEHPFIIIGQLASILYFLLILVLMPITSLFENNLLKW</sequence>
<organism>
    <name type="scientific">Sorex cinereus</name>
    <name type="common">Masked shrew</name>
    <dbReference type="NCBI Taxonomy" id="36803"/>
    <lineage>
        <taxon>Eukaryota</taxon>
        <taxon>Metazoa</taxon>
        <taxon>Chordata</taxon>
        <taxon>Craniata</taxon>
        <taxon>Vertebrata</taxon>
        <taxon>Euteleostomi</taxon>
        <taxon>Mammalia</taxon>
        <taxon>Eutheria</taxon>
        <taxon>Laurasiatheria</taxon>
        <taxon>Eulipotyphla</taxon>
        <taxon>Soricidae</taxon>
        <taxon>Soricinae</taxon>
        <taxon>Sorex</taxon>
    </lineage>
</organism>
<comment type="function">
    <text evidence="2">Component of the ubiquinol-cytochrome c reductase complex (complex III or cytochrome b-c1 complex) that is part of the mitochondrial respiratory chain. The b-c1 complex mediates electron transfer from ubiquinol to cytochrome c. Contributes to the generation of a proton gradient across the mitochondrial membrane that is then used for ATP synthesis.</text>
</comment>
<comment type="cofactor">
    <cofactor evidence="2">
        <name>heme b</name>
        <dbReference type="ChEBI" id="CHEBI:60344"/>
    </cofactor>
    <text evidence="2">Binds 2 heme b groups non-covalently.</text>
</comment>
<comment type="subunit">
    <text evidence="2">The cytochrome bc1 complex contains 11 subunits: 3 respiratory subunits (MT-CYB, CYC1 and UQCRFS1), 2 core proteins (UQCRC1 and UQCRC2) and 6 low-molecular weight proteins (UQCRH/QCR6, UQCRB/QCR7, UQCRQ/QCR8, UQCR10/QCR9, UQCR11/QCR10 and a cleavage product of UQCRFS1). This cytochrome bc1 complex then forms a dimer.</text>
</comment>
<comment type="subcellular location">
    <subcellularLocation>
        <location evidence="2">Mitochondrion inner membrane</location>
        <topology evidence="2">Multi-pass membrane protein</topology>
    </subcellularLocation>
</comment>
<comment type="miscellaneous">
    <text evidence="1">Heme 1 (or BL or b562) is low-potential and absorbs at about 562 nm, and heme 2 (or BH or b566) is high-potential and absorbs at about 566 nm.</text>
</comment>
<comment type="similarity">
    <text evidence="3 4">Belongs to the cytochrome b family.</text>
</comment>
<comment type="caution">
    <text evidence="2">The full-length protein contains only eight transmembrane helices, not nine as predicted by bioinformatics tools.</text>
</comment>
<geneLocation type="mitochondrion"/>
<dbReference type="EMBL" id="AY014941">
    <property type="protein sequence ID" value="AAG40500.1"/>
    <property type="molecule type" value="Genomic_DNA"/>
</dbReference>
<dbReference type="EMBL" id="AY014943">
    <property type="protein sequence ID" value="AAG40502.1"/>
    <property type="molecule type" value="Genomic_DNA"/>
</dbReference>
<dbReference type="EMBL" id="AY014949">
    <property type="protein sequence ID" value="AAG40508.1"/>
    <property type="molecule type" value="Genomic_DNA"/>
</dbReference>
<dbReference type="EMBL" id="AY014952">
    <property type="protein sequence ID" value="AAG40511.1"/>
    <property type="molecule type" value="Genomic_DNA"/>
</dbReference>
<dbReference type="EMBL" id="D85355">
    <property type="protein sequence ID" value="BAA21348.1"/>
    <property type="molecule type" value="Genomic_DNA"/>
</dbReference>
<dbReference type="EMBL" id="AJ000456">
    <property type="protein sequence ID" value="CAA04100.1"/>
    <property type="molecule type" value="Genomic_DNA"/>
</dbReference>
<dbReference type="SMR" id="O79451"/>
<dbReference type="GO" id="GO:0005743">
    <property type="term" value="C:mitochondrial inner membrane"/>
    <property type="evidence" value="ECO:0007669"/>
    <property type="project" value="UniProtKB-SubCell"/>
</dbReference>
<dbReference type="GO" id="GO:0045275">
    <property type="term" value="C:respiratory chain complex III"/>
    <property type="evidence" value="ECO:0007669"/>
    <property type="project" value="InterPro"/>
</dbReference>
<dbReference type="GO" id="GO:0046872">
    <property type="term" value="F:metal ion binding"/>
    <property type="evidence" value="ECO:0007669"/>
    <property type="project" value="UniProtKB-KW"/>
</dbReference>
<dbReference type="GO" id="GO:0008121">
    <property type="term" value="F:ubiquinol-cytochrome-c reductase activity"/>
    <property type="evidence" value="ECO:0007669"/>
    <property type="project" value="InterPro"/>
</dbReference>
<dbReference type="GO" id="GO:0006122">
    <property type="term" value="P:mitochondrial electron transport, ubiquinol to cytochrome c"/>
    <property type="evidence" value="ECO:0007669"/>
    <property type="project" value="TreeGrafter"/>
</dbReference>
<dbReference type="CDD" id="cd00290">
    <property type="entry name" value="cytochrome_b_C"/>
    <property type="match status" value="1"/>
</dbReference>
<dbReference type="CDD" id="cd00284">
    <property type="entry name" value="Cytochrome_b_N"/>
    <property type="match status" value="1"/>
</dbReference>
<dbReference type="FunFam" id="1.20.810.10:FF:000002">
    <property type="entry name" value="Cytochrome b"/>
    <property type="match status" value="1"/>
</dbReference>
<dbReference type="Gene3D" id="1.20.810.10">
    <property type="entry name" value="Cytochrome Bc1 Complex, Chain C"/>
    <property type="match status" value="1"/>
</dbReference>
<dbReference type="InterPro" id="IPR005798">
    <property type="entry name" value="Cyt_b/b6_C"/>
</dbReference>
<dbReference type="InterPro" id="IPR036150">
    <property type="entry name" value="Cyt_b/b6_C_sf"/>
</dbReference>
<dbReference type="InterPro" id="IPR005797">
    <property type="entry name" value="Cyt_b/b6_N"/>
</dbReference>
<dbReference type="InterPro" id="IPR027387">
    <property type="entry name" value="Cytb/b6-like_sf"/>
</dbReference>
<dbReference type="InterPro" id="IPR030689">
    <property type="entry name" value="Cytochrome_b"/>
</dbReference>
<dbReference type="InterPro" id="IPR048260">
    <property type="entry name" value="Cytochrome_b_C_euk/bac"/>
</dbReference>
<dbReference type="InterPro" id="IPR048259">
    <property type="entry name" value="Cytochrome_b_N_euk/bac"/>
</dbReference>
<dbReference type="InterPro" id="IPR016174">
    <property type="entry name" value="Di-haem_cyt_TM"/>
</dbReference>
<dbReference type="PANTHER" id="PTHR19271">
    <property type="entry name" value="CYTOCHROME B"/>
    <property type="match status" value="1"/>
</dbReference>
<dbReference type="PANTHER" id="PTHR19271:SF16">
    <property type="entry name" value="CYTOCHROME B"/>
    <property type="match status" value="1"/>
</dbReference>
<dbReference type="Pfam" id="PF00032">
    <property type="entry name" value="Cytochrom_B_C"/>
    <property type="match status" value="1"/>
</dbReference>
<dbReference type="Pfam" id="PF00033">
    <property type="entry name" value="Cytochrome_B"/>
    <property type="match status" value="1"/>
</dbReference>
<dbReference type="PIRSF" id="PIRSF038885">
    <property type="entry name" value="COB"/>
    <property type="match status" value="1"/>
</dbReference>
<dbReference type="SUPFAM" id="SSF81648">
    <property type="entry name" value="a domain/subunit of cytochrome bc1 complex (Ubiquinol-cytochrome c reductase)"/>
    <property type="match status" value="1"/>
</dbReference>
<dbReference type="SUPFAM" id="SSF81342">
    <property type="entry name" value="Transmembrane di-heme cytochromes"/>
    <property type="match status" value="1"/>
</dbReference>
<dbReference type="PROSITE" id="PS51003">
    <property type="entry name" value="CYTB_CTER"/>
    <property type="match status" value="1"/>
</dbReference>
<dbReference type="PROSITE" id="PS51002">
    <property type="entry name" value="CYTB_NTER"/>
    <property type="match status" value="1"/>
</dbReference>
<keyword id="KW-0249">Electron transport</keyword>
<keyword id="KW-0349">Heme</keyword>
<keyword id="KW-0408">Iron</keyword>
<keyword id="KW-0472">Membrane</keyword>
<keyword id="KW-0479">Metal-binding</keyword>
<keyword id="KW-0496">Mitochondrion</keyword>
<keyword id="KW-0999">Mitochondrion inner membrane</keyword>
<keyword id="KW-0679">Respiratory chain</keyword>
<keyword id="KW-0812">Transmembrane</keyword>
<keyword id="KW-1133">Transmembrane helix</keyword>
<keyword id="KW-0813">Transport</keyword>
<keyword id="KW-0830">Ubiquinone</keyword>
<accession>O79451</accession>
<accession>O21396</accession>
<accession>Q8SFK8</accession>
<accession>Q8SFK9</accession>
<accession>Q8SFL0</accession>
<accession>Q8SFL1</accession>
<proteinExistence type="inferred from homology"/>
<evidence type="ECO:0000250" key="1"/>
<evidence type="ECO:0000250" key="2">
    <source>
        <dbReference type="UniProtKB" id="P00157"/>
    </source>
</evidence>
<evidence type="ECO:0000255" key="3">
    <source>
        <dbReference type="PROSITE-ProRule" id="PRU00967"/>
    </source>
</evidence>
<evidence type="ECO:0000255" key="4">
    <source>
        <dbReference type="PROSITE-ProRule" id="PRU00968"/>
    </source>
</evidence>
<evidence type="ECO:0000305" key="5"/>
<name>CYB_SORCI</name>
<gene>
    <name type="primary">MT-CYB</name>
    <name type="synonym">COB</name>
    <name type="synonym">CYTB</name>
    <name type="synonym">MTCYB</name>
</gene>
<protein>
    <recommendedName>
        <fullName>Cytochrome b</fullName>
    </recommendedName>
    <alternativeName>
        <fullName>Complex III subunit 3</fullName>
    </alternativeName>
    <alternativeName>
        <fullName>Complex III subunit III</fullName>
    </alternativeName>
    <alternativeName>
        <fullName>Cytochrome b-c1 complex subunit 3</fullName>
    </alternativeName>
    <alternativeName>
        <fullName>Ubiquinol-cytochrome-c reductase complex cytochrome b subunit</fullName>
    </alternativeName>
</protein>